<feature type="chain" id="PRO_0000174875" description="Co-chaperonin GroES">
    <location>
        <begin position="1"/>
        <end position="103"/>
    </location>
</feature>
<protein>
    <recommendedName>
        <fullName evidence="1">Co-chaperonin GroES</fullName>
    </recommendedName>
    <alternativeName>
        <fullName evidence="1">10 kDa chaperonin</fullName>
    </alternativeName>
    <alternativeName>
        <fullName evidence="1">Chaperonin-10</fullName>
        <shortName evidence="1">Cpn10</shortName>
    </alternativeName>
</protein>
<dbReference type="EMBL" id="X05925">
    <property type="protein sequence ID" value="CAA29361.1"/>
    <property type="molecule type" value="Genomic_DNA"/>
</dbReference>
<dbReference type="EMBL" id="AP008231">
    <property type="protein sequence ID" value="BAD79978.1"/>
    <property type="molecule type" value="Genomic_DNA"/>
</dbReference>
<dbReference type="PIR" id="S10836">
    <property type="entry name" value="BVYCGS"/>
</dbReference>
<dbReference type="RefSeq" id="WP_011244098.1">
    <property type="nucleotide sequence ID" value="NZ_CP085785.1"/>
</dbReference>
<dbReference type="SMR" id="P07889"/>
<dbReference type="GeneID" id="72431201"/>
<dbReference type="KEGG" id="syc:syc1788_d"/>
<dbReference type="eggNOG" id="COG0234">
    <property type="taxonomic scope" value="Bacteria"/>
</dbReference>
<dbReference type="Proteomes" id="UP000001175">
    <property type="component" value="Chromosome"/>
</dbReference>
<dbReference type="GO" id="GO:0005737">
    <property type="term" value="C:cytoplasm"/>
    <property type="evidence" value="ECO:0007669"/>
    <property type="project" value="UniProtKB-SubCell"/>
</dbReference>
<dbReference type="GO" id="GO:0005524">
    <property type="term" value="F:ATP binding"/>
    <property type="evidence" value="ECO:0007669"/>
    <property type="project" value="InterPro"/>
</dbReference>
<dbReference type="GO" id="GO:0046872">
    <property type="term" value="F:metal ion binding"/>
    <property type="evidence" value="ECO:0007669"/>
    <property type="project" value="TreeGrafter"/>
</dbReference>
<dbReference type="GO" id="GO:0044183">
    <property type="term" value="F:protein folding chaperone"/>
    <property type="evidence" value="ECO:0007669"/>
    <property type="project" value="InterPro"/>
</dbReference>
<dbReference type="GO" id="GO:0051087">
    <property type="term" value="F:protein-folding chaperone binding"/>
    <property type="evidence" value="ECO:0007669"/>
    <property type="project" value="TreeGrafter"/>
</dbReference>
<dbReference type="GO" id="GO:0051082">
    <property type="term" value="F:unfolded protein binding"/>
    <property type="evidence" value="ECO:0007669"/>
    <property type="project" value="TreeGrafter"/>
</dbReference>
<dbReference type="GO" id="GO:0051085">
    <property type="term" value="P:chaperone cofactor-dependent protein refolding"/>
    <property type="evidence" value="ECO:0007669"/>
    <property type="project" value="TreeGrafter"/>
</dbReference>
<dbReference type="CDD" id="cd00320">
    <property type="entry name" value="cpn10"/>
    <property type="match status" value="1"/>
</dbReference>
<dbReference type="FunFam" id="2.30.33.40:FF:000001">
    <property type="entry name" value="10 kDa chaperonin"/>
    <property type="match status" value="1"/>
</dbReference>
<dbReference type="Gene3D" id="2.30.33.40">
    <property type="entry name" value="GroES chaperonin"/>
    <property type="match status" value="1"/>
</dbReference>
<dbReference type="HAMAP" id="MF_00580">
    <property type="entry name" value="CH10"/>
    <property type="match status" value="1"/>
</dbReference>
<dbReference type="InterPro" id="IPR020818">
    <property type="entry name" value="Chaperonin_GroES"/>
</dbReference>
<dbReference type="InterPro" id="IPR037124">
    <property type="entry name" value="Chaperonin_GroES_sf"/>
</dbReference>
<dbReference type="InterPro" id="IPR018369">
    <property type="entry name" value="Chaprnonin_Cpn10_CS"/>
</dbReference>
<dbReference type="InterPro" id="IPR011032">
    <property type="entry name" value="GroES-like_sf"/>
</dbReference>
<dbReference type="NCBIfam" id="NF001527">
    <property type="entry name" value="PRK00364.1-2"/>
    <property type="match status" value="1"/>
</dbReference>
<dbReference type="NCBIfam" id="NF001530">
    <property type="entry name" value="PRK00364.1-6"/>
    <property type="match status" value="1"/>
</dbReference>
<dbReference type="NCBIfam" id="NF001531">
    <property type="entry name" value="PRK00364.2-2"/>
    <property type="match status" value="1"/>
</dbReference>
<dbReference type="NCBIfam" id="NF001533">
    <property type="entry name" value="PRK00364.2-4"/>
    <property type="match status" value="1"/>
</dbReference>
<dbReference type="NCBIfam" id="NF001534">
    <property type="entry name" value="PRK00364.2-5"/>
    <property type="match status" value="1"/>
</dbReference>
<dbReference type="PANTHER" id="PTHR10772">
    <property type="entry name" value="10 KDA HEAT SHOCK PROTEIN"/>
    <property type="match status" value="1"/>
</dbReference>
<dbReference type="PANTHER" id="PTHR10772:SF58">
    <property type="entry name" value="CO-CHAPERONIN GROES"/>
    <property type="match status" value="1"/>
</dbReference>
<dbReference type="Pfam" id="PF00166">
    <property type="entry name" value="Cpn10"/>
    <property type="match status" value="1"/>
</dbReference>
<dbReference type="PRINTS" id="PR00297">
    <property type="entry name" value="CHAPERONIN10"/>
</dbReference>
<dbReference type="SMART" id="SM00883">
    <property type="entry name" value="Cpn10"/>
    <property type="match status" value="1"/>
</dbReference>
<dbReference type="SUPFAM" id="SSF50129">
    <property type="entry name" value="GroES-like"/>
    <property type="match status" value="1"/>
</dbReference>
<dbReference type="PROSITE" id="PS00681">
    <property type="entry name" value="CHAPERONINS_CPN10"/>
    <property type="match status" value="1"/>
</dbReference>
<gene>
    <name evidence="1" type="primary">groES</name>
    <name evidence="1" type="synonym">groS</name>
    <name type="ordered locus">syc1788_d</name>
</gene>
<evidence type="ECO:0000255" key="1">
    <source>
        <dbReference type="HAMAP-Rule" id="MF_00580"/>
    </source>
</evidence>
<evidence type="ECO:0000305" key="2"/>
<name>CH10_SYNP6</name>
<proteinExistence type="inferred from homology"/>
<organism>
    <name type="scientific">Synechococcus sp. (strain ATCC 27144 / PCC 6301 / SAUG 1402/1)</name>
    <name type="common">Anacystis nidulans</name>
    <dbReference type="NCBI Taxonomy" id="269084"/>
    <lineage>
        <taxon>Bacteria</taxon>
        <taxon>Bacillati</taxon>
        <taxon>Cyanobacteriota</taxon>
        <taxon>Cyanophyceae</taxon>
        <taxon>Synechococcales</taxon>
        <taxon>Synechococcaceae</taxon>
        <taxon>Synechococcus</taxon>
    </lineage>
</organism>
<accession>P07889</accession>
<comment type="function">
    <text evidence="1">Together with the chaperonin GroEL, plays an essential role in assisting protein folding. The GroEL-GroES system forms a nano-cage that allows encapsulation of the non-native substrate proteins and provides a physical environment optimized to promote and accelerate protein folding. GroES binds to the apical surface of the GroEL ring, thereby capping the opening of the GroEL channel.</text>
</comment>
<comment type="subunit">
    <text evidence="1">Heptamer of 7 subunits arranged in a ring. Interacts with the chaperonin GroEL.</text>
</comment>
<comment type="subcellular location">
    <subcellularLocation>
        <location evidence="1">Cytoplasm</location>
    </subcellularLocation>
</comment>
<comment type="similarity">
    <text evidence="1 2">Belongs to the GroES chaperonin family.</text>
</comment>
<reference key="1">
    <citation type="journal article" date="1987" name="J. Mol. Biol.">
        <title>The organization and sequence of the genes for ATP synthase subunits in the cyanobacterium Synechococcus 6301. Support for an endosymbiotic origin of chloroplasts.</title>
        <authorList>
            <person name="Cozens A.L."/>
            <person name="Walker J.E."/>
        </authorList>
    </citation>
    <scope>NUCLEOTIDE SEQUENCE [GENOMIC DNA]</scope>
</reference>
<reference key="2">
    <citation type="journal article" date="2007" name="Photosyn. Res.">
        <title>Complete nucleotide sequence of the freshwater unicellular cyanobacterium Synechococcus elongatus PCC 6301 chromosome: gene content and organization.</title>
        <authorList>
            <person name="Sugita C."/>
            <person name="Ogata K."/>
            <person name="Shikata M."/>
            <person name="Jikuya H."/>
            <person name="Takano J."/>
            <person name="Furumichi M."/>
            <person name="Kanehisa M."/>
            <person name="Omata T."/>
            <person name="Sugiura M."/>
            <person name="Sugita M."/>
        </authorList>
    </citation>
    <scope>NUCLEOTIDE SEQUENCE [LARGE SCALE GENOMIC DNA]</scope>
    <source>
        <strain>ATCC 27144 / PCC 6301 / SAUG 1402/1</strain>
    </source>
</reference>
<reference key="3">
    <citation type="journal article" date="1989" name="Nucleic Acids Res.">
        <title>Identification of two unknown reading frames in Synechococcus 6301 as homologues of the 10k and 65k antigen genes of Mycobacterium tuberculosis and related heat shock genes in E. coli and Coxiella burnetii.</title>
        <authorList>
            <person name="Cookson M.J."/>
            <person name="Baird P.N."/>
            <person name="Hall L.M."/>
            <person name="Coates A.R.M."/>
        </authorList>
    </citation>
    <scope>SIMILARITY TO CHAPERONINS</scope>
</reference>
<keyword id="KW-0143">Chaperone</keyword>
<keyword id="KW-0963">Cytoplasm</keyword>
<sequence>MAAVSLSVSTVTPLGDRVFVKVAEAEEKTAGGIILPDNAKEKPQVGEIVAVGPGKRNDDGSRQAPEVKIGDKVLYSKYAGTDIKLGNDDYVLLSEKDILAVVA</sequence>